<protein>
    <recommendedName>
        <fullName evidence="1">Lysine--tRNA ligase</fullName>
        <ecNumber evidence="1">6.1.1.6</ecNumber>
    </recommendedName>
    <alternativeName>
        <fullName evidence="1">Lysyl-tRNA synthetase</fullName>
        <shortName evidence="1">LysRS</shortName>
    </alternativeName>
</protein>
<reference key="1">
    <citation type="submission" date="2008-10" db="EMBL/GenBank/DDBJ databases">
        <title>Genome sequence of Bacillus cereus AH187.</title>
        <authorList>
            <person name="Dodson R.J."/>
            <person name="Durkin A.S."/>
            <person name="Rosovitz M.J."/>
            <person name="Rasko D.A."/>
            <person name="Kolsto A.B."/>
            <person name="Okstad O.A."/>
            <person name="Ravel J."/>
            <person name="Sutton G."/>
        </authorList>
    </citation>
    <scope>NUCLEOTIDE SEQUENCE [LARGE SCALE GENOMIC DNA]</scope>
    <source>
        <strain>AH187</strain>
    </source>
</reference>
<sequence>MDNMNHEELNDQLLVRREKLHNLREQGIDPFGKRFERTNATNELLSLYGEFSKEELEEKEISVSIAGRIMTKRGKGKAGFAHIQDLHGQVQIYVRKDAVGDEEYELFKTADLGDLVGIEGKVFKTNVGELSVKATGFTLLTKSLRPLPDKYHGLKDVEQRYRQRYLDLITSMESRETFVTRSKIIREMRRYLDDNGYLEVETPMMHAIAGGASARPFITHHNALDMELYMRIAIELHLKRLIVGGLEKVYEIGRVFRNEGVSTRHNPEFTMIELYEAYADYKDIMKLTENMVAHIAKQVLGTTTIQYGDYEINLEPEWTRLHMVDAIKEHSGADFWNPMSVEEARELAKEHNVEIKDTMEVGHIINEFFEQKVEDKLIQPTFIYGHPVEISPLAKKNDEDPRFTDRFELFIVAREHANAFTELNDPIDQKERFEAQLKEREQGNDEAHMMDDDYIEALEYGMPPTGGLGIGIDRLVMLLTNAPSIRDVLLFPAMRHKQD</sequence>
<organism>
    <name type="scientific">Bacillus cereus (strain AH187)</name>
    <dbReference type="NCBI Taxonomy" id="405534"/>
    <lineage>
        <taxon>Bacteria</taxon>
        <taxon>Bacillati</taxon>
        <taxon>Bacillota</taxon>
        <taxon>Bacilli</taxon>
        <taxon>Bacillales</taxon>
        <taxon>Bacillaceae</taxon>
        <taxon>Bacillus</taxon>
        <taxon>Bacillus cereus group</taxon>
    </lineage>
</organism>
<name>SYK_BACC7</name>
<accession>B7HPY8</accession>
<proteinExistence type="inferred from homology"/>
<feature type="chain" id="PRO_1000199238" description="Lysine--tRNA ligase">
    <location>
        <begin position="1"/>
        <end position="499"/>
    </location>
</feature>
<feature type="binding site" evidence="1">
    <location>
        <position position="408"/>
    </location>
    <ligand>
        <name>Mg(2+)</name>
        <dbReference type="ChEBI" id="CHEBI:18420"/>
        <label>1</label>
    </ligand>
</feature>
<feature type="binding site" evidence="1">
    <location>
        <position position="415"/>
    </location>
    <ligand>
        <name>Mg(2+)</name>
        <dbReference type="ChEBI" id="CHEBI:18420"/>
        <label>1</label>
    </ligand>
</feature>
<feature type="binding site" evidence="1">
    <location>
        <position position="415"/>
    </location>
    <ligand>
        <name>Mg(2+)</name>
        <dbReference type="ChEBI" id="CHEBI:18420"/>
        <label>2</label>
    </ligand>
</feature>
<gene>
    <name evidence="1" type="primary">lysS</name>
    <name type="ordered locus">BCAH187_A0088</name>
</gene>
<evidence type="ECO:0000255" key="1">
    <source>
        <dbReference type="HAMAP-Rule" id="MF_00252"/>
    </source>
</evidence>
<dbReference type="EC" id="6.1.1.6" evidence="1"/>
<dbReference type="EMBL" id="CP001177">
    <property type="protein sequence ID" value="ACJ78531.1"/>
    <property type="molecule type" value="Genomic_DNA"/>
</dbReference>
<dbReference type="SMR" id="B7HPY8"/>
<dbReference type="KEGG" id="bcr:BCAH187_A0088"/>
<dbReference type="HOGENOM" id="CLU_008255_6_0_9"/>
<dbReference type="Proteomes" id="UP000002214">
    <property type="component" value="Chromosome"/>
</dbReference>
<dbReference type="GO" id="GO:0005829">
    <property type="term" value="C:cytosol"/>
    <property type="evidence" value="ECO:0007669"/>
    <property type="project" value="TreeGrafter"/>
</dbReference>
<dbReference type="GO" id="GO:0005524">
    <property type="term" value="F:ATP binding"/>
    <property type="evidence" value="ECO:0007669"/>
    <property type="project" value="UniProtKB-UniRule"/>
</dbReference>
<dbReference type="GO" id="GO:0140096">
    <property type="term" value="F:catalytic activity, acting on a protein"/>
    <property type="evidence" value="ECO:0007669"/>
    <property type="project" value="UniProtKB-ARBA"/>
</dbReference>
<dbReference type="GO" id="GO:0004824">
    <property type="term" value="F:lysine-tRNA ligase activity"/>
    <property type="evidence" value="ECO:0007669"/>
    <property type="project" value="UniProtKB-UniRule"/>
</dbReference>
<dbReference type="GO" id="GO:0000287">
    <property type="term" value="F:magnesium ion binding"/>
    <property type="evidence" value="ECO:0007669"/>
    <property type="project" value="UniProtKB-UniRule"/>
</dbReference>
<dbReference type="GO" id="GO:0016740">
    <property type="term" value="F:transferase activity"/>
    <property type="evidence" value="ECO:0007669"/>
    <property type="project" value="UniProtKB-ARBA"/>
</dbReference>
<dbReference type="GO" id="GO:0000049">
    <property type="term" value="F:tRNA binding"/>
    <property type="evidence" value="ECO:0007669"/>
    <property type="project" value="TreeGrafter"/>
</dbReference>
<dbReference type="GO" id="GO:0006430">
    <property type="term" value="P:lysyl-tRNA aminoacylation"/>
    <property type="evidence" value="ECO:0007669"/>
    <property type="project" value="UniProtKB-UniRule"/>
</dbReference>
<dbReference type="CDD" id="cd00775">
    <property type="entry name" value="LysRS_core"/>
    <property type="match status" value="1"/>
</dbReference>
<dbReference type="CDD" id="cd04322">
    <property type="entry name" value="LysRS_N"/>
    <property type="match status" value="1"/>
</dbReference>
<dbReference type="FunFam" id="2.40.50.140:FF:000024">
    <property type="entry name" value="Lysine--tRNA ligase"/>
    <property type="match status" value="1"/>
</dbReference>
<dbReference type="FunFam" id="3.30.930.10:FF:000001">
    <property type="entry name" value="Lysine--tRNA ligase"/>
    <property type="match status" value="1"/>
</dbReference>
<dbReference type="Gene3D" id="3.30.930.10">
    <property type="entry name" value="Bira Bifunctional Protein, Domain 2"/>
    <property type="match status" value="1"/>
</dbReference>
<dbReference type="Gene3D" id="2.40.50.140">
    <property type="entry name" value="Nucleic acid-binding proteins"/>
    <property type="match status" value="1"/>
</dbReference>
<dbReference type="HAMAP" id="MF_00252">
    <property type="entry name" value="Lys_tRNA_synth_class2"/>
    <property type="match status" value="1"/>
</dbReference>
<dbReference type="InterPro" id="IPR004364">
    <property type="entry name" value="Aa-tRNA-synt_II"/>
</dbReference>
<dbReference type="InterPro" id="IPR006195">
    <property type="entry name" value="aa-tRNA-synth_II"/>
</dbReference>
<dbReference type="InterPro" id="IPR045864">
    <property type="entry name" value="aa-tRNA-synth_II/BPL/LPL"/>
</dbReference>
<dbReference type="InterPro" id="IPR002313">
    <property type="entry name" value="Lys-tRNA-ligase_II"/>
</dbReference>
<dbReference type="InterPro" id="IPR034762">
    <property type="entry name" value="Lys-tRNA-ligase_II_bac/euk"/>
</dbReference>
<dbReference type="InterPro" id="IPR044136">
    <property type="entry name" value="Lys-tRNA-ligase_II_N"/>
</dbReference>
<dbReference type="InterPro" id="IPR018149">
    <property type="entry name" value="Lys-tRNA-synth_II_C"/>
</dbReference>
<dbReference type="InterPro" id="IPR012340">
    <property type="entry name" value="NA-bd_OB-fold"/>
</dbReference>
<dbReference type="InterPro" id="IPR004365">
    <property type="entry name" value="NA-bd_OB_tRNA"/>
</dbReference>
<dbReference type="NCBIfam" id="TIGR00499">
    <property type="entry name" value="lysS_bact"/>
    <property type="match status" value="1"/>
</dbReference>
<dbReference type="NCBIfam" id="NF001756">
    <property type="entry name" value="PRK00484.1"/>
    <property type="match status" value="1"/>
</dbReference>
<dbReference type="PANTHER" id="PTHR42918:SF15">
    <property type="entry name" value="LYSINE--TRNA LIGASE, CHLOROPLASTIC_MITOCHONDRIAL"/>
    <property type="match status" value="1"/>
</dbReference>
<dbReference type="PANTHER" id="PTHR42918">
    <property type="entry name" value="LYSYL-TRNA SYNTHETASE"/>
    <property type="match status" value="1"/>
</dbReference>
<dbReference type="Pfam" id="PF00152">
    <property type="entry name" value="tRNA-synt_2"/>
    <property type="match status" value="1"/>
</dbReference>
<dbReference type="Pfam" id="PF01336">
    <property type="entry name" value="tRNA_anti-codon"/>
    <property type="match status" value="1"/>
</dbReference>
<dbReference type="PIRSF" id="PIRSF039101">
    <property type="entry name" value="LysRS2"/>
    <property type="match status" value="1"/>
</dbReference>
<dbReference type="PRINTS" id="PR00982">
    <property type="entry name" value="TRNASYNTHLYS"/>
</dbReference>
<dbReference type="SUPFAM" id="SSF55681">
    <property type="entry name" value="Class II aaRS and biotin synthetases"/>
    <property type="match status" value="1"/>
</dbReference>
<dbReference type="SUPFAM" id="SSF50249">
    <property type="entry name" value="Nucleic acid-binding proteins"/>
    <property type="match status" value="1"/>
</dbReference>
<dbReference type="PROSITE" id="PS50862">
    <property type="entry name" value="AA_TRNA_LIGASE_II"/>
    <property type="match status" value="1"/>
</dbReference>
<comment type="catalytic activity">
    <reaction evidence="1">
        <text>tRNA(Lys) + L-lysine + ATP = L-lysyl-tRNA(Lys) + AMP + diphosphate</text>
        <dbReference type="Rhea" id="RHEA:20792"/>
        <dbReference type="Rhea" id="RHEA-COMP:9696"/>
        <dbReference type="Rhea" id="RHEA-COMP:9697"/>
        <dbReference type="ChEBI" id="CHEBI:30616"/>
        <dbReference type="ChEBI" id="CHEBI:32551"/>
        <dbReference type="ChEBI" id="CHEBI:33019"/>
        <dbReference type="ChEBI" id="CHEBI:78442"/>
        <dbReference type="ChEBI" id="CHEBI:78529"/>
        <dbReference type="ChEBI" id="CHEBI:456215"/>
        <dbReference type="EC" id="6.1.1.6"/>
    </reaction>
</comment>
<comment type="cofactor">
    <cofactor evidence="1">
        <name>Mg(2+)</name>
        <dbReference type="ChEBI" id="CHEBI:18420"/>
    </cofactor>
    <text evidence="1">Binds 3 Mg(2+) ions per subunit.</text>
</comment>
<comment type="subunit">
    <text evidence="1">Homodimer.</text>
</comment>
<comment type="subcellular location">
    <subcellularLocation>
        <location evidence="1">Cytoplasm</location>
    </subcellularLocation>
</comment>
<comment type="similarity">
    <text evidence="1">Belongs to the class-II aminoacyl-tRNA synthetase family.</text>
</comment>
<keyword id="KW-0030">Aminoacyl-tRNA synthetase</keyword>
<keyword id="KW-0067">ATP-binding</keyword>
<keyword id="KW-0963">Cytoplasm</keyword>
<keyword id="KW-0436">Ligase</keyword>
<keyword id="KW-0460">Magnesium</keyword>
<keyword id="KW-0479">Metal-binding</keyword>
<keyword id="KW-0547">Nucleotide-binding</keyword>
<keyword id="KW-0648">Protein biosynthesis</keyword>